<keyword id="KW-0687">Ribonucleoprotein</keyword>
<keyword id="KW-0689">Ribosomal protein</keyword>
<accession>Q2NXC6</accession>
<proteinExistence type="inferred from homology"/>
<organism>
    <name type="scientific">Xanthomonas oryzae pv. oryzae (strain MAFF 311018)</name>
    <dbReference type="NCBI Taxonomy" id="342109"/>
    <lineage>
        <taxon>Bacteria</taxon>
        <taxon>Pseudomonadati</taxon>
        <taxon>Pseudomonadota</taxon>
        <taxon>Gammaproteobacteria</taxon>
        <taxon>Lysobacterales</taxon>
        <taxon>Lysobacteraceae</taxon>
        <taxon>Xanthomonas</taxon>
    </lineage>
</organism>
<dbReference type="EMBL" id="AP008229">
    <property type="protein sequence ID" value="BAE71051.1"/>
    <property type="molecule type" value="Genomic_DNA"/>
</dbReference>
<dbReference type="RefSeq" id="WP_002809462.1">
    <property type="nucleotide sequence ID" value="NC_007705.1"/>
</dbReference>
<dbReference type="SMR" id="Q2NXC6"/>
<dbReference type="GeneID" id="97512303"/>
<dbReference type="KEGG" id="xom:XOO4296"/>
<dbReference type="HOGENOM" id="CLU_190949_1_1_6"/>
<dbReference type="GO" id="GO:0022625">
    <property type="term" value="C:cytosolic large ribosomal subunit"/>
    <property type="evidence" value="ECO:0007669"/>
    <property type="project" value="TreeGrafter"/>
</dbReference>
<dbReference type="GO" id="GO:0003735">
    <property type="term" value="F:structural constituent of ribosome"/>
    <property type="evidence" value="ECO:0007669"/>
    <property type="project" value="InterPro"/>
</dbReference>
<dbReference type="GO" id="GO:0006412">
    <property type="term" value="P:translation"/>
    <property type="evidence" value="ECO:0007669"/>
    <property type="project" value="UniProtKB-UniRule"/>
</dbReference>
<dbReference type="FunFam" id="2.20.28.120:FF:000001">
    <property type="entry name" value="50S ribosomal protein L33"/>
    <property type="match status" value="1"/>
</dbReference>
<dbReference type="Gene3D" id="2.20.28.120">
    <property type="entry name" value="Ribosomal protein L33"/>
    <property type="match status" value="1"/>
</dbReference>
<dbReference type="HAMAP" id="MF_00294">
    <property type="entry name" value="Ribosomal_bL33"/>
    <property type="match status" value="1"/>
</dbReference>
<dbReference type="InterPro" id="IPR001705">
    <property type="entry name" value="Ribosomal_bL33"/>
</dbReference>
<dbReference type="InterPro" id="IPR018264">
    <property type="entry name" value="Ribosomal_bL33_CS"/>
</dbReference>
<dbReference type="InterPro" id="IPR038584">
    <property type="entry name" value="Ribosomal_bL33_sf"/>
</dbReference>
<dbReference type="InterPro" id="IPR011332">
    <property type="entry name" value="Ribosomal_zn-bd"/>
</dbReference>
<dbReference type="NCBIfam" id="NF001860">
    <property type="entry name" value="PRK00595.1"/>
    <property type="match status" value="1"/>
</dbReference>
<dbReference type="NCBIfam" id="TIGR01023">
    <property type="entry name" value="rpmG_bact"/>
    <property type="match status" value="1"/>
</dbReference>
<dbReference type="PANTHER" id="PTHR15238">
    <property type="entry name" value="54S RIBOSOMAL PROTEIN L39, MITOCHONDRIAL"/>
    <property type="match status" value="1"/>
</dbReference>
<dbReference type="PANTHER" id="PTHR15238:SF1">
    <property type="entry name" value="LARGE RIBOSOMAL SUBUNIT PROTEIN BL33M"/>
    <property type="match status" value="1"/>
</dbReference>
<dbReference type="Pfam" id="PF00471">
    <property type="entry name" value="Ribosomal_L33"/>
    <property type="match status" value="1"/>
</dbReference>
<dbReference type="SUPFAM" id="SSF57829">
    <property type="entry name" value="Zn-binding ribosomal proteins"/>
    <property type="match status" value="1"/>
</dbReference>
<dbReference type="PROSITE" id="PS00582">
    <property type="entry name" value="RIBOSOMAL_L33"/>
    <property type="match status" value="1"/>
</dbReference>
<name>RL33_XANOM</name>
<protein>
    <recommendedName>
        <fullName evidence="1">Large ribosomal subunit protein bL33</fullName>
    </recommendedName>
    <alternativeName>
        <fullName evidence="2">50S ribosomal protein L33</fullName>
    </alternativeName>
</protein>
<gene>
    <name evidence="1" type="primary">rpmG</name>
    <name type="ordered locus">XOO4296</name>
</gene>
<feature type="chain" id="PRO_1000004216" description="Large ribosomal subunit protein bL33">
    <location>
        <begin position="1"/>
        <end position="55"/>
    </location>
</feature>
<evidence type="ECO:0000255" key="1">
    <source>
        <dbReference type="HAMAP-Rule" id="MF_00294"/>
    </source>
</evidence>
<evidence type="ECO:0000305" key="2"/>
<reference key="1">
    <citation type="journal article" date="2005" name="Jpn. Agric. Res. Q.">
        <title>Genome sequence of Xanthomonas oryzae pv. oryzae suggests contribution of large numbers of effector genes and insertion sequences to its race diversity.</title>
        <authorList>
            <person name="Ochiai H."/>
            <person name="Inoue Y."/>
            <person name="Takeya M."/>
            <person name="Sasaki A."/>
            <person name="Kaku H."/>
        </authorList>
    </citation>
    <scope>NUCLEOTIDE SEQUENCE [LARGE SCALE GENOMIC DNA]</scope>
    <source>
        <strain>MAFF 311018</strain>
    </source>
</reference>
<sequence length="55" mass="6406">MAKGKRDKIRMISSAATGHFYTTDKNKKNTPGKMEMMKYDPVVRKHVMYKEGKIK</sequence>
<comment type="similarity">
    <text evidence="1">Belongs to the bacterial ribosomal protein bL33 family.</text>
</comment>